<evidence type="ECO:0000255" key="1">
    <source>
        <dbReference type="HAMAP-Rule" id="MF_01459"/>
    </source>
</evidence>
<keyword id="KW-0456">Lyase</keyword>
<accession>Q02188</accession>
<organism>
    <name type="scientific">Synechococcus sp. (strain WH8020)</name>
    <dbReference type="NCBI Taxonomy" id="32052"/>
    <lineage>
        <taxon>Bacteria</taxon>
        <taxon>Bacillati</taxon>
        <taxon>Cyanobacteriota</taxon>
        <taxon>Cyanophyceae</taxon>
        <taxon>Synechococcales</taxon>
        <taxon>Synechococcaceae</taxon>
        <taxon>Synechococcus</taxon>
    </lineage>
</organism>
<name>CPXS_SYNPY</name>
<sequence length="200" mass="22726">MTVMDNPPVTMEDFFETSRGLWLIRRVVHHLDSQDDEAADSNLVIEPFNASDEAVEKVCKVFGIEASEANGGARFWWESNLLAEKRNDDYAAIVIDVPKPEHPDQGYLLRDVGYVEKKPALSTYEFTPDGVLTIKTRYDTNFGIERCWFVNDQIRMRVSSVQFLNGAAMTTYCTEFRCPSKADIEQIANQAKTFAQTNPL</sequence>
<comment type="function">
    <text evidence="1">Covalently attaches a chromophore to Cys residue(s) of phycobiliproteins.</text>
</comment>
<comment type="similarity">
    <text evidence="1">Belongs to the CpcS/CpeS biliprotein lyase family.</text>
</comment>
<proteinExistence type="inferred from homology"/>
<gene>
    <name evidence="1" type="primary">cpcS</name>
</gene>
<feature type="chain" id="PRO_0000199295" description="Chromophore lyase CpcS/CpeS">
    <location>
        <begin position="1"/>
        <end position="200"/>
    </location>
</feature>
<protein>
    <recommendedName>
        <fullName evidence="1">Chromophore lyase CpcS/CpeS</fullName>
        <ecNumber evidence="1">4.-.-.-</ecNumber>
    </recommendedName>
    <alternativeName>
        <fullName>ORF200</fullName>
    </alternativeName>
</protein>
<reference key="1">
    <citation type="journal article" date="1993" name="Plant Mol. Biol.">
        <title>Genes of the R-phycocyanin II locus of marine Synechococcus spp., and comparison of protein-chromophore interactions in phycocyanins differing in bilin composition.</title>
        <authorList>
            <person name="de Lorimier R."/>
            <person name="Wilbanks S.M."/>
            <person name="Glazer A.N."/>
        </authorList>
    </citation>
    <scope>NUCLEOTIDE SEQUENCE [GENOMIC DNA]</scope>
</reference>
<reference key="2">
    <citation type="journal article" date="1993" name="J. Biol. Chem.">
        <title>Rod structure of a phycoerythrin II-containing phycobilisome. I. Organization and sequence of the gene cluster encoding the major phycobiliprotein rod components in the genome of marine Synechococcus sp. WH8020.</title>
        <authorList>
            <person name="Wilbanks S.M."/>
            <person name="Glazer A.N."/>
        </authorList>
    </citation>
    <scope>NUCLEOTIDE SEQUENCE [GENOMIC DNA]</scope>
</reference>
<dbReference type="EC" id="4.-.-.-" evidence="1"/>
<dbReference type="EMBL" id="M95288">
    <property type="protein sequence ID" value="AAA27342.1"/>
    <property type="molecule type" value="Genomic_DNA"/>
</dbReference>
<dbReference type="PIR" id="I45045">
    <property type="entry name" value="I45045"/>
</dbReference>
<dbReference type="RefSeq" id="WP_048347956.1">
    <property type="nucleotide sequence ID" value="NZ_CP011941.1"/>
</dbReference>
<dbReference type="SMR" id="Q02188"/>
<dbReference type="STRING" id="32052.WB44_13645"/>
<dbReference type="OrthoDB" id="554080at2"/>
<dbReference type="GO" id="GO:0016829">
    <property type="term" value="F:lyase activity"/>
    <property type="evidence" value="ECO:0007669"/>
    <property type="project" value="UniProtKB-KW"/>
</dbReference>
<dbReference type="CDD" id="cd19433">
    <property type="entry name" value="lipocalin_CpcS-CpeS"/>
    <property type="match status" value="1"/>
</dbReference>
<dbReference type="Gene3D" id="2.40.128.20">
    <property type="match status" value="1"/>
</dbReference>
<dbReference type="HAMAP" id="MF_01459">
    <property type="entry name" value="Chrphore_lyase_CpxS"/>
    <property type="match status" value="1"/>
</dbReference>
<dbReference type="InterPro" id="IPR012674">
    <property type="entry name" value="Calycin"/>
</dbReference>
<dbReference type="InterPro" id="IPR018536">
    <property type="entry name" value="CpcS/CpeS"/>
</dbReference>
<dbReference type="Pfam" id="PF09367">
    <property type="entry name" value="CpeS"/>
    <property type="match status" value="1"/>
</dbReference>